<reference key="1">
    <citation type="journal article" date="2008" name="Chem. Biol. Interact.">
        <title>Extending the Bacillus cereus group genomics to putative food-borne pathogens of different toxicity.</title>
        <authorList>
            <person name="Lapidus A."/>
            <person name="Goltsman E."/>
            <person name="Auger S."/>
            <person name="Galleron N."/>
            <person name="Segurens B."/>
            <person name="Dossat C."/>
            <person name="Land M.L."/>
            <person name="Broussolle V."/>
            <person name="Brillard J."/>
            <person name="Guinebretiere M.-H."/>
            <person name="Sanchis V."/>
            <person name="Nguen-the C."/>
            <person name="Lereclus D."/>
            <person name="Richardson P."/>
            <person name="Wincker P."/>
            <person name="Weissenbach J."/>
            <person name="Ehrlich S.D."/>
            <person name="Sorokin A."/>
        </authorList>
    </citation>
    <scope>NUCLEOTIDE SEQUENCE [LARGE SCALE GENOMIC DNA]</scope>
    <source>
        <strain>DSM 22905 / CIP 110041 / 391-98 / NVH 391-98</strain>
    </source>
</reference>
<keyword id="KW-0963">Cytoplasm</keyword>
<keyword id="KW-0444">Lipid biosynthesis</keyword>
<keyword id="KW-0443">Lipid metabolism</keyword>
<keyword id="KW-0594">Phospholipid biosynthesis</keyword>
<keyword id="KW-1208">Phospholipid metabolism</keyword>
<keyword id="KW-0808">Transferase</keyword>
<name>PLSX_BACCN</name>
<gene>
    <name evidence="1" type="primary">plsX</name>
    <name type="ordered locus">Bcer98_2505</name>
</gene>
<protein>
    <recommendedName>
        <fullName evidence="1">Phosphate acyltransferase</fullName>
        <ecNumber evidence="1">2.3.1.274</ecNumber>
    </recommendedName>
    <alternativeName>
        <fullName evidence="1">Acyl-ACP phosphotransacylase</fullName>
    </alternativeName>
    <alternativeName>
        <fullName evidence="1">Acyl-[acyl-carrier-protein]--phosphate acyltransferase</fullName>
    </alternativeName>
    <alternativeName>
        <fullName evidence="1">Phosphate-acyl-ACP acyltransferase</fullName>
    </alternativeName>
</protein>
<accession>A7GRI3</accession>
<organism>
    <name type="scientific">Bacillus cytotoxicus (strain DSM 22905 / CIP 110041 / 391-98 / NVH 391-98)</name>
    <dbReference type="NCBI Taxonomy" id="315749"/>
    <lineage>
        <taxon>Bacteria</taxon>
        <taxon>Bacillati</taxon>
        <taxon>Bacillota</taxon>
        <taxon>Bacilli</taxon>
        <taxon>Bacillales</taxon>
        <taxon>Bacillaceae</taxon>
        <taxon>Bacillus</taxon>
        <taxon>Bacillus cereus group</taxon>
    </lineage>
</organism>
<comment type="function">
    <text evidence="1">Catalyzes the reversible formation of acyl-phosphate (acyl-PO(4)) from acyl-[acyl-carrier-protein] (acyl-ACP). This enzyme utilizes acyl-ACP as fatty acyl donor, but not acyl-CoA.</text>
</comment>
<comment type="catalytic activity">
    <reaction evidence="1">
        <text>a fatty acyl-[ACP] + phosphate = an acyl phosphate + holo-[ACP]</text>
        <dbReference type="Rhea" id="RHEA:42292"/>
        <dbReference type="Rhea" id="RHEA-COMP:9685"/>
        <dbReference type="Rhea" id="RHEA-COMP:14125"/>
        <dbReference type="ChEBI" id="CHEBI:43474"/>
        <dbReference type="ChEBI" id="CHEBI:59918"/>
        <dbReference type="ChEBI" id="CHEBI:64479"/>
        <dbReference type="ChEBI" id="CHEBI:138651"/>
        <dbReference type="EC" id="2.3.1.274"/>
    </reaction>
</comment>
<comment type="pathway">
    <text evidence="1">Lipid metabolism; phospholipid metabolism.</text>
</comment>
<comment type="subunit">
    <text evidence="1">Homodimer. Probably interacts with PlsY.</text>
</comment>
<comment type="subcellular location">
    <subcellularLocation>
        <location evidence="1">Cytoplasm</location>
    </subcellularLocation>
    <text evidence="1">Associated with the membrane possibly through PlsY.</text>
</comment>
<comment type="similarity">
    <text evidence="1">Belongs to the PlsX family.</text>
</comment>
<dbReference type="EC" id="2.3.1.274" evidence="1"/>
<dbReference type="EMBL" id="CP000764">
    <property type="protein sequence ID" value="ABS22741.1"/>
    <property type="molecule type" value="Genomic_DNA"/>
</dbReference>
<dbReference type="RefSeq" id="WP_012094947.1">
    <property type="nucleotide sequence ID" value="NC_009674.1"/>
</dbReference>
<dbReference type="SMR" id="A7GRI3"/>
<dbReference type="STRING" id="315749.Bcer98_2505"/>
<dbReference type="GeneID" id="33897760"/>
<dbReference type="KEGG" id="bcy:Bcer98_2505"/>
<dbReference type="eggNOG" id="COG0416">
    <property type="taxonomic scope" value="Bacteria"/>
</dbReference>
<dbReference type="HOGENOM" id="CLU_039379_1_1_9"/>
<dbReference type="OrthoDB" id="9806408at2"/>
<dbReference type="UniPathway" id="UPA00085"/>
<dbReference type="Proteomes" id="UP000002300">
    <property type="component" value="Chromosome"/>
</dbReference>
<dbReference type="GO" id="GO:0005737">
    <property type="term" value="C:cytoplasm"/>
    <property type="evidence" value="ECO:0007669"/>
    <property type="project" value="UniProtKB-SubCell"/>
</dbReference>
<dbReference type="GO" id="GO:0043811">
    <property type="term" value="F:phosphate:acyl-[acyl carrier protein] acyltransferase activity"/>
    <property type="evidence" value="ECO:0007669"/>
    <property type="project" value="UniProtKB-UniRule"/>
</dbReference>
<dbReference type="GO" id="GO:0006633">
    <property type="term" value="P:fatty acid biosynthetic process"/>
    <property type="evidence" value="ECO:0007669"/>
    <property type="project" value="UniProtKB-UniRule"/>
</dbReference>
<dbReference type="GO" id="GO:0008654">
    <property type="term" value="P:phospholipid biosynthetic process"/>
    <property type="evidence" value="ECO:0007669"/>
    <property type="project" value="UniProtKB-KW"/>
</dbReference>
<dbReference type="Gene3D" id="3.40.718.10">
    <property type="entry name" value="Isopropylmalate Dehydrogenase"/>
    <property type="match status" value="1"/>
</dbReference>
<dbReference type="HAMAP" id="MF_00019">
    <property type="entry name" value="PlsX"/>
    <property type="match status" value="1"/>
</dbReference>
<dbReference type="InterPro" id="IPR003664">
    <property type="entry name" value="FA_synthesis"/>
</dbReference>
<dbReference type="InterPro" id="IPR012281">
    <property type="entry name" value="Phospholipid_synth_PlsX-like"/>
</dbReference>
<dbReference type="NCBIfam" id="TIGR00182">
    <property type="entry name" value="plsX"/>
    <property type="match status" value="1"/>
</dbReference>
<dbReference type="PANTHER" id="PTHR30100">
    <property type="entry name" value="FATTY ACID/PHOSPHOLIPID SYNTHESIS PROTEIN PLSX"/>
    <property type="match status" value="1"/>
</dbReference>
<dbReference type="PANTHER" id="PTHR30100:SF1">
    <property type="entry name" value="PHOSPHATE ACYLTRANSFERASE"/>
    <property type="match status" value="1"/>
</dbReference>
<dbReference type="Pfam" id="PF02504">
    <property type="entry name" value="FA_synthesis"/>
    <property type="match status" value="1"/>
</dbReference>
<dbReference type="PIRSF" id="PIRSF002465">
    <property type="entry name" value="Phsphlp_syn_PlsX"/>
    <property type="match status" value="1"/>
</dbReference>
<dbReference type="SUPFAM" id="SSF53659">
    <property type="entry name" value="Isocitrate/Isopropylmalate dehydrogenase-like"/>
    <property type="match status" value="1"/>
</dbReference>
<feature type="chain" id="PRO_1000074156" description="Phosphate acyltransferase">
    <location>
        <begin position="1"/>
        <end position="330"/>
    </location>
</feature>
<proteinExistence type="inferred from homology"/>
<evidence type="ECO:0000255" key="1">
    <source>
        <dbReference type="HAMAP-Rule" id="MF_00019"/>
    </source>
</evidence>
<sequence length="330" mass="35467">MKIAIDAMGGDHAPKAVVLGAMKAIKEYSDLHITLVGKEEEIRQYLTNEERITILHTDEKIEATDEPVRAVRRKKQASMVLAAQQVKEGKADACISAGSTGALMAAGLFVVGRMEGIERPALSPTMPTVGGEGFVMLDVGANVDAKPIHLYQYALMGSVYAEKVRGIKNPRVGLLNVGTEDGKGNDLSKQVFSMLKDAPIHFVGNVESRDLLQGVADVVVCDGFTGNVALKSLEGTALALFSMLKEQLMSSFTSKLAAAVLKPKLMTLKDKMDYSEYGGAALFGLKAPVIKAHGSSNDQSIFSAIRQTREMVAKEVIPTISSVMEKEPLR</sequence>